<protein>
    <recommendedName>
        <fullName evidence="3">Putative fatty acid elongase 4</fullName>
        <ecNumber>2.3.1.199</ecNumber>
    </recommendedName>
    <alternativeName>
        <fullName>3-keto acyl-CoA synthase elo-4</fullName>
    </alternativeName>
    <alternativeName>
        <fullName>Putative fatty acid elongation protein 4</fullName>
    </alternativeName>
    <alternativeName>
        <fullName>Very-long-chain 3-oxoacyl-CoA synthase 4</fullName>
    </alternativeName>
</protein>
<gene>
    <name type="primary">elo-4</name>
    <name type="ORF">C40H1.4</name>
</gene>
<evidence type="ECO:0000250" key="1"/>
<evidence type="ECO:0000255" key="2"/>
<evidence type="ECO:0000305" key="3"/>
<name>ELO4_CAEEL</name>
<keyword id="KW-0275">Fatty acid biosynthesis</keyword>
<keyword id="KW-0276">Fatty acid metabolism</keyword>
<keyword id="KW-0444">Lipid biosynthesis</keyword>
<keyword id="KW-0443">Lipid metabolism</keyword>
<keyword id="KW-0472">Membrane</keyword>
<keyword id="KW-1185">Reference proteome</keyword>
<keyword id="KW-0808">Transferase</keyword>
<keyword id="KW-0812">Transmembrane</keyword>
<keyword id="KW-1133">Transmembrane helix</keyword>
<organism>
    <name type="scientific">Caenorhabditis elegans</name>
    <dbReference type="NCBI Taxonomy" id="6239"/>
    <lineage>
        <taxon>Eukaryota</taxon>
        <taxon>Metazoa</taxon>
        <taxon>Ecdysozoa</taxon>
        <taxon>Nematoda</taxon>
        <taxon>Chromadorea</taxon>
        <taxon>Rhabditida</taxon>
        <taxon>Rhabditina</taxon>
        <taxon>Rhabditomorpha</taxon>
        <taxon>Rhabditoidea</taxon>
        <taxon>Rhabditidae</taxon>
        <taxon>Peloderinae</taxon>
        <taxon>Caenorhabditis</taxon>
    </lineage>
</organism>
<dbReference type="EC" id="2.3.1.199"/>
<dbReference type="EMBL" id="Z19154">
    <property type="protein sequence ID" value="CAA79555.1"/>
    <property type="molecule type" value="Genomic_DNA"/>
</dbReference>
<dbReference type="PIR" id="S28299">
    <property type="entry name" value="S28299"/>
</dbReference>
<dbReference type="RefSeq" id="NP_499056.1">
    <property type="nucleotide sequence ID" value="NM_066655.6"/>
</dbReference>
<dbReference type="SMR" id="Q03574"/>
<dbReference type="BioGRID" id="48196">
    <property type="interactions" value="1"/>
</dbReference>
<dbReference type="FunCoup" id="Q03574">
    <property type="interactions" value="134"/>
</dbReference>
<dbReference type="STRING" id="6239.C40H1.4.1"/>
<dbReference type="PaxDb" id="6239-C40H1.4"/>
<dbReference type="EnsemblMetazoa" id="C40H1.4.1">
    <property type="protein sequence ID" value="C40H1.4.1"/>
    <property type="gene ID" value="WBGene00001242"/>
</dbReference>
<dbReference type="GeneID" id="183367"/>
<dbReference type="KEGG" id="cel:CELE_C40H1.4"/>
<dbReference type="UCSC" id="C40H1.4">
    <property type="organism name" value="c. elegans"/>
</dbReference>
<dbReference type="AGR" id="WB:WBGene00001242"/>
<dbReference type="CTD" id="183367"/>
<dbReference type="WormBase" id="C40H1.4">
    <property type="protein sequence ID" value="CE00112"/>
    <property type="gene ID" value="WBGene00001242"/>
    <property type="gene designation" value="elo-4"/>
</dbReference>
<dbReference type="eggNOG" id="KOG3072">
    <property type="taxonomic scope" value="Eukaryota"/>
</dbReference>
<dbReference type="GeneTree" id="ENSGT01050000244965"/>
<dbReference type="HOGENOM" id="CLU_048483_1_2_1"/>
<dbReference type="InParanoid" id="Q03574"/>
<dbReference type="OMA" id="GRFYILM"/>
<dbReference type="OrthoDB" id="10259681at2759"/>
<dbReference type="PhylomeDB" id="Q03574"/>
<dbReference type="Reactome" id="R-CEL-2046105">
    <property type="pathway name" value="Linoleic acid (LA) metabolism"/>
</dbReference>
<dbReference type="Reactome" id="R-CEL-2046106">
    <property type="pathway name" value="alpha-linolenic acid (ALA) metabolism"/>
</dbReference>
<dbReference type="Reactome" id="R-CEL-75876">
    <property type="pathway name" value="Synthesis of very long-chain fatty acyl-CoAs"/>
</dbReference>
<dbReference type="UniPathway" id="UPA00094"/>
<dbReference type="PRO" id="PR:Q03574"/>
<dbReference type="Proteomes" id="UP000001940">
    <property type="component" value="Chromosome III"/>
</dbReference>
<dbReference type="Bgee" id="WBGene00001242">
    <property type="expression patterns" value="Expressed in embryo and 3 other cell types or tissues"/>
</dbReference>
<dbReference type="GO" id="GO:0005789">
    <property type="term" value="C:endoplasmic reticulum membrane"/>
    <property type="evidence" value="ECO:0000250"/>
    <property type="project" value="UniProtKB"/>
</dbReference>
<dbReference type="GO" id="GO:0009922">
    <property type="term" value="F:fatty acid elongase activity"/>
    <property type="evidence" value="ECO:0000318"/>
    <property type="project" value="GO_Central"/>
</dbReference>
<dbReference type="GO" id="GO:0034625">
    <property type="term" value="P:fatty acid elongation, monounsaturated fatty acid"/>
    <property type="evidence" value="ECO:0000318"/>
    <property type="project" value="GO_Central"/>
</dbReference>
<dbReference type="GO" id="GO:0034626">
    <property type="term" value="P:fatty acid elongation, polyunsaturated fatty acid"/>
    <property type="evidence" value="ECO:0000318"/>
    <property type="project" value="GO_Central"/>
</dbReference>
<dbReference type="GO" id="GO:0019367">
    <property type="term" value="P:fatty acid elongation, saturated fatty acid"/>
    <property type="evidence" value="ECO:0000318"/>
    <property type="project" value="GO_Central"/>
</dbReference>
<dbReference type="GO" id="GO:0030148">
    <property type="term" value="P:sphingolipid biosynthetic process"/>
    <property type="evidence" value="ECO:0000318"/>
    <property type="project" value="GO_Central"/>
</dbReference>
<dbReference type="GO" id="GO:0042761">
    <property type="term" value="P:very long-chain fatty acid biosynthetic process"/>
    <property type="evidence" value="ECO:0000318"/>
    <property type="project" value="GO_Central"/>
</dbReference>
<dbReference type="InterPro" id="IPR030457">
    <property type="entry name" value="ELO_CS"/>
</dbReference>
<dbReference type="InterPro" id="IPR002076">
    <property type="entry name" value="ELO_fam"/>
</dbReference>
<dbReference type="PANTHER" id="PTHR11157">
    <property type="entry name" value="FATTY ACID ACYL TRANSFERASE-RELATED"/>
    <property type="match status" value="1"/>
</dbReference>
<dbReference type="PANTHER" id="PTHR11157:SF156">
    <property type="entry name" value="FATTY ACID ELONGATION PROTEIN 4-RELATED"/>
    <property type="match status" value="1"/>
</dbReference>
<dbReference type="Pfam" id="PF01151">
    <property type="entry name" value="ELO"/>
    <property type="match status" value="1"/>
</dbReference>
<dbReference type="PROSITE" id="PS01188">
    <property type="entry name" value="ELO"/>
    <property type="match status" value="1"/>
</dbReference>
<sequence>MELAEFWNDLNTFTIYGPNHTDMTTKYKYSYHFPGEQVADPQYWTILFQKYWYHSITISVLYFILIKVIQKFMENRKPFTLKYPLILWNGALAAFSIIATLRFSIDPLRSLYAEGFYKTLCYSCNPTDVAAFWSFAFALSKIVELGDTMFIILRKRPLIFLHYYHHAAVLIYTVHSGAEHTAAGRFYILMNYFAHSLMYTYYTVSAMGYRLPKWVSMTVTTVQTTQMLAGVGITWMVYKVKTEYKLPCQQSVANLYLAFVIYVTFAILFIQFFVKAYIIKSSKKSKSVKNE</sequence>
<accession>Q03574</accession>
<comment type="function">
    <text evidence="1">Could be implicated in synthesis of very long chain fatty acids.</text>
</comment>
<comment type="catalytic activity">
    <reaction>
        <text>a very-long-chain acyl-CoA + malonyl-CoA + H(+) = a very-long-chain 3-oxoacyl-CoA + CO2 + CoA</text>
        <dbReference type="Rhea" id="RHEA:32727"/>
        <dbReference type="ChEBI" id="CHEBI:15378"/>
        <dbReference type="ChEBI" id="CHEBI:16526"/>
        <dbReference type="ChEBI" id="CHEBI:57287"/>
        <dbReference type="ChEBI" id="CHEBI:57384"/>
        <dbReference type="ChEBI" id="CHEBI:90725"/>
        <dbReference type="ChEBI" id="CHEBI:90736"/>
        <dbReference type="EC" id="2.3.1.199"/>
    </reaction>
</comment>
<comment type="pathway">
    <text>Lipid metabolism; fatty acid biosynthesis.</text>
</comment>
<comment type="subcellular location">
    <subcellularLocation>
        <location evidence="3">Membrane</location>
        <topology evidence="3">Multi-pass membrane protein</topology>
    </subcellularLocation>
</comment>
<comment type="similarity">
    <text evidence="3">Belongs to the ELO family.</text>
</comment>
<reference key="1">
    <citation type="journal article" date="1994" name="Nature">
        <title>2.2 Mb of contiguous nucleotide sequence from chromosome III of C. elegans.</title>
        <authorList>
            <person name="Wilson R."/>
            <person name="Ainscough R."/>
            <person name="Anderson K."/>
            <person name="Baynes C."/>
            <person name="Berks M."/>
            <person name="Bonfield J."/>
            <person name="Burton J."/>
            <person name="Connell M."/>
            <person name="Copsey T."/>
            <person name="Cooper J."/>
            <person name="Coulson A."/>
            <person name="Craxton M."/>
            <person name="Dear S."/>
            <person name="Du Z."/>
            <person name="Durbin R."/>
            <person name="Favello A."/>
            <person name="Fraser A."/>
            <person name="Fulton L."/>
            <person name="Gardner A."/>
            <person name="Green P."/>
            <person name="Hawkins T."/>
            <person name="Hillier L."/>
            <person name="Jier M."/>
            <person name="Johnston L."/>
            <person name="Jones M."/>
            <person name="Kershaw J."/>
            <person name="Kirsten J."/>
            <person name="Laisster N."/>
            <person name="Latreille P."/>
            <person name="Lightning J."/>
            <person name="Lloyd C."/>
            <person name="Mortimore B."/>
            <person name="O'Callaghan M."/>
            <person name="Parsons J."/>
            <person name="Percy C."/>
            <person name="Rifken L."/>
            <person name="Roopra A."/>
            <person name="Saunders D."/>
            <person name="Shownkeen R."/>
            <person name="Sims M."/>
            <person name="Smaldon N."/>
            <person name="Smith A."/>
            <person name="Smith M."/>
            <person name="Sonnhammer E."/>
            <person name="Staden R."/>
            <person name="Sulston J."/>
            <person name="Thierry-Mieg J."/>
            <person name="Thomas K."/>
            <person name="Vaudin M."/>
            <person name="Vaughan K."/>
            <person name="Waterston R."/>
            <person name="Watson A."/>
            <person name="Weinstock L."/>
            <person name="Wilkinson-Sproat J."/>
            <person name="Wohldman P."/>
        </authorList>
    </citation>
    <scope>NUCLEOTIDE SEQUENCE [LARGE SCALE GENOMIC DNA]</scope>
    <source>
        <strain>Bristol N2</strain>
    </source>
</reference>
<reference key="2">
    <citation type="journal article" date="1998" name="Science">
        <title>Genome sequence of the nematode C. elegans: a platform for investigating biology.</title>
        <authorList>
            <consortium name="The C. elegans sequencing consortium"/>
        </authorList>
    </citation>
    <scope>NUCLEOTIDE SEQUENCE [LARGE SCALE GENOMIC DNA]</scope>
    <source>
        <strain>Bristol N2</strain>
    </source>
</reference>
<proteinExistence type="inferred from homology"/>
<feature type="chain" id="PRO_0000207547" description="Putative fatty acid elongase 4">
    <location>
        <begin position="1"/>
        <end position="291"/>
    </location>
</feature>
<feature type="transmembrane region" description="Helical" evidence="2">
    <location>
        <begin position="46"/>
        <end position="66"/>
    </location>
</feature>
<feature type="transmembrane region" description="Helical" evidence="2">
    <location>
        <begin position="79"/>
        <end position="99"/>
    </location>
</feature>
<feature type="transmembrane region" description="Helical" evidence="2">
    <location>
        <begin position="254"/>
        <end position="274"/>
    </location>
</feature>